<gene>
    <name type="primary">MT-CYB</name>
    <name type="synonym">COB</name>
    <name type="synonym">CYTB</name>
    <name type="synonym">MTCYB</name>
</gene>
<keyword id="KW-0249">Electron transport</keyword>
<keyword id="KW-0349">Heme</keyword>
<keyword id="KW-0408">Iron</keyword>
<keyword id="KW-0472">Membrane</keyword>
<keyword id="KW-0479">Metal-binding</keyword>
<keyword id="KW-0496">Mitochondrion</keyword>
<keyword id="KW-0999">Mitochondrion inner membrane</keyword>
<keyword id="KW-0679">Respiratory chain</keyword>
<keyword id="KW-0812">Transmembrane</keyword>
<keyword id="KW-1133">Transmembrane helix</keyword>
<keyword id="KW-0813">Transport</keyword>
<keyword id="KW-0830">Ubiquinone</keyword>
<organism>
    <name type="scientific">Tayassu pecari</name>
    <name type="common">White-lipped peccary</name>
    <dbReference type="NCBI Taxonomy" id="30535"/>
    <lineage>
        <taxon>Eukaryota</taxon>
        <taxon>Metazoa</taxon>
        <taxon>Chordata</taxon>
        <taxon>Craniata</taxon>
        <taxon>Vertebrata</taxon>
        <taxon>Euteleostomi</taxon>
        <taxon>Mammalia</taxon>
        <taxon>Eutheria</taxon>
        <taxon>Laurasiatheria</taxon>
        <taxon>Artiodactyla</taxon>
        <taxon>Suina</taxon>
        <taxon>Tayassuidae</taxon>
        <taxon>Tayassu</taxon>
    </lineage>
</organism>
<name>CYB_TAYPE</name>
<comment type="function">
    <text evidence="2">Component of the ubiquinol-cytochrome c reductase complex (complex III or cytochrome b-c1 complex) that is part of the mitochondrial respiratory chain. The b-c1 complex mediates electron transfer from ubiquinol to cytochrome c. Contributes to the generation of a proton gradient across the mitochondrial membrane that is then used for ATP synthesis.</text>
</comment>
<comment type="cofactor">
    <cofactor evidence="2">
        <name>heme b</name>
        <dbReference type="ChEBI" id="CHEBI:60344"/>
    </cofactor>
    <text evidence="2">Binds 2 heme b groups non-covalently.</text>
</comment>
<comment type="subunit">
    <text evidence="2">The cytochrome bc1 complex contains 11 subunits: 3 respiratory subunits (MT-CYB, CYC1 and UQCRFS1), 2 core proteins (UQCRC1 and UQCRC2) and 6 low-molecular weight proteins (UQCRH/QCR6, UQCRB/QCR7, UQCRQ/QCR8, UQCR10/QCR9, UQCR11/QCR10 and a cleavage product of UQCRFS1). This cytochrome bc1 complex then forms a dimer.</text>
</comment>
<comment type="subcellular location">
    <subcellularLocation>
        <location evidence="2">Mitochondrion inner membrane</location>
        <topology evidence="2">Multi-pass membrane protein</topology>
    </subcellularLocation>
</comment>
<comment type="miscellaneous">
    <text evidence="1">Heme 1 (or BL or b562) is low-potential and absorbs at about 562 nm, and heme 2 (or BH or b566) is high-potential and absorbs at about 566 nm.</text>
</comment>
<comment type="similarity">
    <text evidence="3 4">Belongs to the cytochrome b family.</text>
</comment>
<comment type="caution">
    <text evidence="2">The full-length protein contains only eight transmembrane helices, not nine as predicted by bioinformatics tools.</text>
</comment>
<reference key="1">
    <citation type="journal article" date="2005" name="J. Virol.">
        <title>Evolutionary spread and recombination of porcine endogenous retroviruses in the suiformes.</title>
        <authorList>
            <person name="Niebert M."/>
            <person name="Tonjes R.R."/>
        </authorList>
    </citation>
    <scope>NUCLEOTIDE SEQUENCE [GENOMIC DNA]</scope>
</reference>
<protein>
    <recommendedName>
        <fullName>Cytochrome b</fullName>
    </recommendedName>
    <alternativeName>
        <fullName>Complex III subunit 3</fullName>
    </alternativeName>
    <alternativeName>
        <fullName>Complex III subunit III</fullName>
    </alternativeName>
    <alternativeName>
        <fullName>Cytochrome b-c1 complex subunit 3</fullName>
    </alternativeName>
    <alternativeName>
        <fullName>Ubiquinol-cytochrome-c reductase complex cytochrome b subunit</fullName>
    </alternativeName>
</protein>
<proteinExistence type="inferred from homology"/>
<accession>Q5J1T0</accession>
<feature type="chain" id="PRO_0000061648" description="Cytochrome b">
    <location>
        <begin position="1"/>
        <end position="379"/>
    </location>
</feature>
<feature type="transmembrane region" description="Helical" evidence="2">
    <location>
        <begin position="33"/>
        <end position="53"/>
    </location>
</feature>
<feature type="transmembrane region" description="Helical" evidence="2">
    <location>
        <begin position="77"/>
        <end position="98"/>
    </location>
</feature>
<feature type="transmembrane region" description="Helical" evidence="2">
    <location>
        <begin position="113"/>
        <end position="133"/>
    </location>
</feature>
<feature type="transmembrane region" description="Helical" evidence="2">
    <location>
        <begin position="178"/>
        <end position="198"/>
    </location>
</feature>
<feature type="transmembrane region" description="Helical" evidence="2">
    <location>
        <begin position="226"/>
        <end position="246"/>
    </location>
</feature>
<feature type="transmembrane region" description="Helical" evidence="2">
    <location>
        <begin position="288"/>
        <end position="308"/>
    </location>
</feature>
<feature type="transmembrane region" description="Helical" evidence="2">
    <location>
        <begin position="320"/>
        <end position="340"/>
    </location>
</feature>
<feature type="transmembrane region" description="Helical" evidence="2">
    <location>
        <begin position="347"/>
        <end position="367"/>
    </location>
</feature>
<feature type="binding site" description="axial binding residue" evidence="2">
    <location>
        <position position="83"/>
    </location>
    <ligand>
        <name>heme b</name>
        <dbReference type="ChEBI" id="CHEBI:60344"/>
        <label>b562</label>
    </ligand>
    <ligandPart>
        <name>Fe</name>
        <dbReference type="ChEBI" id="CHEBI:18248"/>
    </ligandPart>
</feature>
<feature type="binding site" description="axial binding residue" evidence="2">
    <location>
        <position position="97"/>
    </location>
    <ligand>
        <name>heme b</name>
        <dbReference type="ChEBI" id="CHEBI:60344"/>
        <label>b566</label>
    </ligand>
    <ligandPart>
        <name>Fe</name>
        <dbReference type="ChEBI" id="CHEBI:18248"/>
    </ligandPart>
</feature>
<feature type="binding site" description="axial binding residue" evidence="2">
    <location>
        <position position="182"/>
    </location>
    <ligand>
        <name>heme b</name>
        <dbReference type="ChEBI" id="CHEBI:60344"/>
        <label>b562</label>
    </ligand>
    <ligandPart>
        <name>Fe</name>
        <dbReference type="ChEBI" id="CHEBI:18248"/>
    </ligandPart>
</feature>
<feature type="binding site" description="axial binding residue" evidence="2">
    <location>
        <position position="196"/>
    </location>
    <ligand>
        <name>heme b</name>
        <dbReference type="ChEBI" id="CHEBI:60344"/>
        <label>b566</label>
    </ligand>
    <ligandPart>
        <name>Fe</name>
        <dbReference type="ChEBI" id="CHEBI:18248"/>
    </ligandPart>
</feature>
<feature type="binding site" evidence="2">
    <location>
        <position position="201"/>
    </location>
    <ligand>
        <name>a ubiquinone</name>
        <dbReference type="ChEBI" id="CHEBI:16389"/>
    </ligand>
</feature>
<evidence type="ECO:0000250" key="1"/>
<evidence type="ECO:0000250" key="2">
    <source>
        <dbReference type="UniProtKB" id="P00157"/>
    </source>
</evidence>
<evidence type="ECO:0000255" key="3">
    <source>
        <dbReference type="PROSITE-ProRule" id="PRU00967"/>
    </source>
</evidence>
<evidence type="ECO:0000255" key="4">
    <source>
        <dbReference type="PROSITE-ProRule" id="PRU00968"/>
    </source>
</evidence>
<dbReference type="EMBL" id="AY534303">
    <property type="protein sequence ID" value="AAT77446.1"/>
    <property type="molecule type" value="Genomic_DNA"/>
</dbReference>
<dbReference type="SMR" id="Q5J1T0"/>
<dbReference type="GO" id="GO:0005743">
    <property type="term" value="C:mitochondrial inner membrane"/>
    <property type="evidence" value="ECO:0007669"/>
    <property type="project" value="UniProtKB-SubCell"/>
</dbReference>
<dbReference type="GO" id="GO:0045275">
    <property type="term" value="C:respiratory chain complex III"/>
    <property type="evidence" value="ECO:0007669"/>
    <property type="project" value="InterPro"/>
</dbReference>
<dbReference type="GO" id="GO:0046872">
    <property type="term" value="F:metal ion binding"/>
    <property type="evidence" value="ECO:0007669"/>
    <property type="project" value="UniProtKB-KW"/>
</dbReference>
<dbReference type="GO" id="GO:0008121">
    <property type="term" value="F:ubiquinol-cytochrome-c reductase activity"/>
    <property type="evidence" value="ECO:0007669"/>
    <property type="project" value="InterPro"/>
</dbReference>
<dbReference type="GO" id="GO:0006122">
    <property type="term" value="P:mitochondrial electron transport, ubiquinol to cytochrome c"/>
    <property type="evidence" value="ECO:0007669"/>
    <property type="project" value="TreeGrafter"/>
</dbReference>
<dbReference type="CDD" id="cd00290">
    <property type="entry name" value="cytochrome_b_C"/>
    <property type="match status" value="1"/>
</dbReference>
<dbReference type="CDD" id="cd00284">
    <property type="entry name" value="Cytochrome_b_N"/>
    <property type="match status" value="1"/>
</dbReference>
<dbReference type="FunFam" id="1.20.810.10:FF:000002">
    <property type="entry name" value="Cytochrome b"/>
    <property type="match status" value="1"/>
</dbReference>
<dbReference type="Gene3D" id="1.20.810.10">
    <property type="entry name" value="Cytochrome Bc1 Complex, Chain C"/>
    <property type="match status" value="1"/>
</dbReference>
<dbReference type="InterPro" id="IPR005798">
    <property type="entry name" value="Cyt_b/b6_C"/>
</dbReference>
<dbReference type="InterPro" id="IPR036150">
    <property type="entry name" value="Cyt_b/b6_C_sf"/>
</dbReference>
<dbReference type="InterPro" id="IPR005797">
    <property type="entry name" value="Cyt_b/b6_N"/>
</dbReference>
<dbReference type="InterPro" id="IPR027387">
    <property type="entry name" value="Cytb/b6-like_sf"/>
</dbReference>
<dbReference type="InterPro" id="IPR030689">
    <property type="entry name" value="Cytochrome_b"/>
</dbReference>
<dbReference type="InterPro" id="IPR048260">
    <property type="entry name" value="Cytochrome_b_C_euk/bac"/>
</dbReference>
<dbReference type="InterPro" id="IPR048259">
    <property type="entry name" value="Cytochrome_b_N_euk/bac"/>
</dbReference>
<dbReference type="InterPro" id="IPR016174">
    <property type="entry name" value="Di-haem_cyt_TM"/>
</dbReference>
<dbReference type="PANTHER" id="PTHR19271">
    <property type="entry name" value="CYTOCHROME B"/>
    <property type="match status" value="1"/>
</dbReference>
<dbReference type="PANTHER" id="PTHR19271:SF16">
    <property type="entry name" value="CYTOCHROME B"/>
    <property type="match status" value="1"/>
</dbReference>
<dbReference type="Pfam" id="PF00032">
    <property type="entry name" value="Cytochrom_B_C"/>
    <property type="match status" value="1"/>
</dbReference>
<dbReference type="Pfam" id="PF00033">
    <property type="entry name" value="Cytochrome_B"/>
    <property type="match status" value="1"/>
</dbReference>
<dbReference type="PIRSF" id="PIRSF038885">
    <property type="entry name" value="COB"/>
    <property type="match status" value="1"/>
</dbReference>
<dbReference type="SUPFAM" id="SSF81648">
    <property type="entry name" value="a domain/subunit of cytochrome bc1 complex (Ubiquinol-cytochrome c reductase)"/>
    <property type="match status" value="1"/>
</dbReference>
<dbReference type="SUPFAM" id="SSF81342">
    <property type="entry name" value="Transmembrane di-heme cytochromes"/>
    <property type="match status" value="1"/>
</dbReference>
<dbReference type="PROSITE" id="PS51003">
    <property type="entry name" value="CYTB_CTER"/>
    <property type="match status" value="1"/>
</dbReference>
<dbReference type="PROSITE" id="PS51002">
    <property type="entry name" value="CYTB_NTER"/>
    <property type="match status" value="1"/>
</dbReference>
<sequence length="379" mass="42814">MTNIRKSHPLMKIINNTFIDLPTPSNISSWWNFGSLLGICLLLQILTGLFLAMHYTPDTTTAFSSVTHICRDVNYGWIIRYLHANGASMFFICLFIHVGRGLYYGSYLFLETWNIGVILLLTVMATAFMGYVLPWGQMSFWAATVITNLLSAIPYIGTDLVEWIWGGFSVDKATLTRFFAFHFILPFIITALVIVHLLFLHETGSNNPTGIPSNMDKIPFHPYYTIKDILGATLMILILLLLVLFSPDLLGDPDNYTPANPLNTPSHIKPEWYFLFAYAILRSIPNKLGGVLALALSILILALVPALHTSKQRSMMFRPLSQLLFWMLVADFLTLTWIGSQPVEHPFIIIGQLASILYFLIILVLMPVANIIENNLLKW</sequence>
<geneLocation type="mitochondrion"/>